<feature type="chain" id="PRO_0000129128" description="Biopolymer transport protein ExbD">
    <location>
        <begin position="1"/>
        <end position="145"/>
    </location>
</feature>
<feature type="topological domain" description="Cytoplasmic" evidence="2">
    <location>
        <begin position="1"/>
        <end position="9"/>
    </location>
</feature>
<feature type="transmembrane region" description="Helical" evidence="2">
    <location>
        <begin position="10"/>
        <end position="30"/>
    </location>
</feature>
<feature type="topological domain" description="Periplasmic" evidence="2">
    <location>
        <begin position="31"/>
        <end position="145"/>
    </location>
</feature>
<feature type="region of interest" description="Disordered" evidence="3">
    <location>
        <begin position="126"/>
        <end position="145"/>
    </location>
</feature>
<feature type="compositionally biased region" description="Low complexity" evidence="3">
    <location>
        <begin position="127"/>
        <end position="138"/>
    </location>
</feature>
<evidence type="ECO:0000250" key="1"/>
<evidence type="ECO:0000255" key="2"/>
<evidence type="ECO:0000256" key="3">
    <source>
        <dbReference type="SAM" id="MobiDB-lite"/>
    </source>
</evidence>
<evidence type="ECO:0000305" key="4"/>
<reference key="1">
    <citation type="submission" date="1996-06" db="EMBL/GenBank/DDBJ databases">
        <authorList>
            <person name="Graham M.R."/>
            <person name="Lo R.Y.C."/>
        </authorList>
    </citation>
    <scope>NUCLEOTIDE SEQUENCE [GENOMIC DNA]</scope>
    <source>
        <strain>Serotype A1 / ATCC 43270 / BCRC 13948</strain>
    </source>
</reference>
<accession>P72203</accession>
<name>EXBD_MANHA</name>
<organism>
    <name type="scientific">Mannheimia haemolytica</name>
    <name type="common">Pasteurella haemolytica</name>
    <dbReference type="NCBI Taxonomy" id="75985"/>
    <lineage>
        <taxon>Bacteria</taxon>
        <taxon>Pseudomonadati</taxon>
        <taxon>Pseudomonadota</taxon>
        <taxon>Gammaproteobacteria</taxon>
        <taxon>Pasteurellales</taxon>
        <taxon>Pasteurellaceae</taxon>
        <taxon>Mannheimia</taxon>
    </lineage>
</organism>
<protein>
    <recommendedName>
        <fullName>Biopolymer transport protein ExbD</fullName>
    </recommendedName>
</protein>
<gene>
    <name type="primary">exbD</name>
</gene>
<dbReference type="EMBL" id="U62565">
    <property type="protein sequence ID" value="AAB09529.1"/>
    <property type="molecule type" value="Genomic_DNA"/>
</dbReference>
<dbReference type="RefSeq" id="WP_006247989.1">
    <property type="nucleotide sequence ID" value="NZ_VAJK01000001.1"/>
</dbReference>
<dbReference type="SMR" id="P72203"/>
<dbReference type="STRING" id="75985.WC39_03500"/>
<dbReference type="GeneID" id="67368318"/>
<dbReference type="OrthoDB" id="9798629at2"/>
<dbReference type="GO" id="GO:0005886">
    <property type="term" value="C:plasma membrane"/>
    <property type="evidence" value="ECO:0007669"/>
    <property type="project" value="UniProtKB-SubCell"/>
</dbReference>
<dbReference type="GO" id="GO:0022857">
    <property type="term" value="F:transmembrane transporter activity"/>
    <property type="evidence" value="ECO:0007669"/>
    <property type="project" value="InterPro"/>
</dbReference>
<dbReference type="GO" id="GO:0015031">
    <property type="term" value="P:protein transport"/>
    <property type="evidence" value="ECO:0007669"/>
    <property type="project" value="UniProtKB-KW"/>
</dbReference>
<dbReference type="Gene3D" id="3.30.420.270">
    <property type="match status" value="1"/>
</dbReference>
<dbReference type="InterPro" id="IPR003400">
    <property type="entry name" value="ExbD"/>
</dbReference>
<dbReference type="InterPro" id="IPR014171">
    <property type="entry name" value="TonB_ExbD_2"/>
</dbReference>
<dbReference type="NCBIfam" id="TIGR02804">
    <property type="entry name" value="ExbD_2"/>
    <property type="match status" value="1"/>
</dbReference>
<dbReference type="PANTHER" id="PTHR30558:SF12">
    <property type="entry name" value="BIOPOLYMER TRANSPORT PROTEIN EXBD"/>
    <property type="match status" value="1"/>
</dbReference>
<dbReference type="PANTHER" id="PTHR30558">
    <property type="entry name" value="EXBD MEMBRANE COMPONENT OF PMF-DRIVEN MACROMOLECULE IMPORT SYSTEM"/>
    <property type="match status" value="1"/>
</dbReference>
<dbReference type="Pfam" id="PF02472">
    <property type="entry name" value="ExbD"/>
    <property type="match status" value="1"/>
</dbReference>
<keyword id="KW-0997">Cell inner membrane</keyword>
<keyword id="KW-1003">Cell membrane</keyword>
<keyword id="KW-0472">Membrane</keyword>
<keyword id="KW-0653">Protein transport</keyword>
<keyword id="KW-0812">Transmembrane</keyword>
<keyword id="KW-1133">Transmembrane helix</keyword>
<keyword id="KW-0813">Transport</keyword>
<comment type="function">
    <text evidence="1">Involved in the TonB-dependent energy-dependent transport of various receptor-bound substrates.</text>
</comment>
<comment type="subunit">
    <text evidence="1">The accessory proteins ExbB and ExbD seem to form a complex with TonB.</text>
</comment>
<comment type="subcellular location">
    <subcellularLocation>
        <location evidence="4">Cell inner membrane</location>
        <topology evidence="4">Single-pass type II membrane protein</topology>
    </subcellularLocation>
</comment>
<comment type="similarity">
    <text evidence="4">Belongs to the ExbD/TolR family.</text>
</comment>
<sequence length="145" mass="15728">MKKFDEINIIPFIDIMLVLLAIVLVTASFISQGKIQVNVPKASTTQPMKADDLAKLLTITENNEFFFNDQAITKEQLIAEVATWDKSQKVSLKVDGAVAFEKFVELTDILSANEIKNVAIITKKETAPAPSSTPGSPAQVPAVAP</sequence>
<proteinExistence type="inferred from homology"/>